<feature type="chain" id="PRO_1000121098" description="DNA replication and repair protein RecF">
    <location>
        <begin position="1"/>
        <end position="361"/>
    </location>
</feature>
<feature type="binding site" evidence="1">
    <location>
        <begin position="30"/>
        <end position="37"/>
    </location>
    <ligand>
        <name>ATP</name>
        <dbReference type="ChEBI" id="CHEBI:30616"/>
    </ligand>
</feature>
<name>RECF_CLOBB</name>
<proteinExistence type="inferred from homology"/>
<organism>
    <name type="scientific">Clostridium botulinum (strain Eklund 17B / Type B)</name>
    <dbReference type="NCBI Taxonomy" id="935198"/>
    <lineage>
        <taxon>Bacteria</taxon>
        <taxon>Bacillati</taxon>
        <taxon>Bacillota</taxon>
        <taxon>Clostridia</taxon>
        <taxon>Eubacteriales</taxon>
        <taxon>Clostridiaceae</taxon>
        <taxon>Clostridium</taxon>
    </lineage>
</organism>
<dbReference type="EMBL" id="CP001056">
    <property type="protein sequence ID" value="ACD22044.1"/>
    <property type="molecule type" value="Genomic_DNA"/>
</dbReference>
<dbReference type="SMR" id="B2THB7"/>
<dbReference type="KEGG" id="cbk:CLL_A0004"/>
<dbReference type="PATRIC" id="fig|935198.13.peg.4"/>
<dbReference type="HOGENOM" id="CLU_040267_0_1_9"/>
<dbReference type="Proteomes" id="UP000001195">
    <property type="component" value="Chromosome"/>
</dbReference>
<dbReference type="GO" id="GO:0005737">
    <property type="term" value="C:cytoplasm"/>
    <property type="evidence" value="ECO:0007669"/>
    <property type="project" value="UniProtKB-SubCell"/>
</dbReference>
<dbReference type="GO" id="GO:0005524">
    <property type="term" value="F:ATP binding"/>
    <property type="evidence" value="ECO:0007669"/>
    <property type="project" value="UniProtKB-UniRule"/>
</dbReference>
<dbReference type="GO" id="GO:0003697">
    <property type="term" value="F:single-stranded DNA binding"/>
    <property type="evidence" value="ECO:0007669"/>
    <property type="project" value="UniProtKB-UniRule"/>
</dbReference>
<dbReference type="GO" id="GO:0006260">
    <property type="term" value="P:DNA replication"/>
    <property type="evidence" value="ECO:0007669"/>
    <property type="project" value="UniProtKB-UniRule"/>
</dbReference>
<dbReference type="GO" id="GO:0000731">
    <property type="term" value="P:DNA synthesis involved in DNA repair"/>
    <property type="evidence" value="ECO:0007669"/>
    <property type="project" value="TreeGrafter"/>
</dbReference>
<dbReference type="GO" id="GO:0006302">
    <property type="term" value="P:double-strand break repair"/>
    <property type="evidence" value="ECO:0007669"/>
    <property type="project" value="TreeGrafter"/>
</dbReference>
<dbReference type="GO" id="GO:0009432">
    <property type="term" value="P:SOS response"/>
    <property type="evidence" value="ECO:0007669"/>
    <property type="project" value="UniProtKB-UniRule"/>
</dbReference>
<dbReference type="CDD" id="cd03242">
    <property type="entry name" value="ABC_RecF"/>
    <property type="match status" value="1"/>
</dbReference>
<dbReference type="Gene3D" id="3.40.50.300">
    <property type="entry name" value="P-loop containing nucleotide triphosphate hydrolases"/>
    <property type="match status" value="1"/>
</dbReference>
<dbReference type="Gene3D" id="1.20.1050.90">
    <property type="entry name" value="RecF/RecN/SMC, N-terminal domain"/>
    <property type="match status" value="1"/>
</dbReference>
<dbReference type="HAMAP" id="MF_00365">
    <property type="entry name" value="RecF"/>
    <property type="match status" value="1"/>
</dbReference>
<dbReference type="InterPro" id="IPR001238">
    <property type="entry name" value="DNA-binding_RecF"/>
</dbReference>
<dbReference type="InterPro" id="IPR018078">
    <property type="entry name" value="DNA-binding_RecF_CS"/>
</dbReference>
<dbReference type="InterPro" id="IPR027417">
    <property type="entry name" value="P-loop_NTPase"/>
</dbReference>
<dbReference type="InterPro" id="IPR003395">
    <property type="entry name" value="RecF/RecN/SMC_N"/>
</dbReference>
<dbReference type="InterPro" id="IPR042174">
    <property type="entry name" value="RecF_2"/>
</dbReference>
<dbReference type="NCBIfam" id="TIGR00611">
    <property type="entry name" value="recf"/>
    <property type="match status" value="1"/>
</dbReference>
<dbReference type="PANTHER" id="PTHR32182">
    <property type="entry name" value="DNA REPLICATION AND REPAIR PROTEIN RECF"/>
    <property type="match status" value="1"/>
</dbReference>
<dbReference type="PANTHER" id="PTHR32182:SF0">
    <property type="entry name" value="DNA REPLICATION AND REPAIR PROTEIN RECF"/>
    <property type="match status" value="1"/>
</dbReference>
<dbReference type="Pfam" id="PF02463">
    <property type="entry name" value="SMC_N"/>
    <property type="match status" value="1"/>
</dbReference>
<dbReference type="SUPFAM" id="SSF52540">
    <property type="entry name" value="P-loop containing nucleoside triphosphate hydrolases"/>
    <property type="match status" value="1"/>
</dbReference>
<dbReference type="PROSITE" id="PS00617">
    <property type="entry name" value="RECF_1"/>
    <property type="match status" value="1"/>
</dbReference>
<dbReference type="PROSITE" id="PS00618">
    <property type="entry name" value="RECF_2"/>
    <property type="match status" value="1"/>
</dbReference>
<keyword id="KW-0067">ATP-binding</keyword>
<keyword id="KW-0963">Cytoplasm</keyword>
<keyword id="KW-0227">DNA damage</keyword>
<keyword id="KW-0234">DNA repair</keyword>
<keyword id="KW-0235">DNA replication</keyword>
<keyword id="KW-0238">DNA-binding</keyword>
<keyword id="KW-0547">Nucleotide-binding</keyword>
<keyword id="KW-0742">SOS response</keyword>
<comment type="function">
    <text evidence="1">The RecF protein is involved in DNA metabolism; it is required for DNA replication and normal SOS inducibility. RecF binds preferentially to single-stranded, linear DNA. It also seems to bind ATP.</text>
</comment>
<comment type="subcellular location">
    <subcellularLocation>
        <location evidence="1">Cytoplasm</location>
    </subcellularLocation>
</comment>
<comment type="similarity">
    <text evidence="1">Belongs to the RecF family.</text>
</comment>
<sequence>MYIKAIMLANYRNYNNLELNLSEGVNVFIGDNAQGKTNVLESIYYCAFAKSHRTSRDKDLINWKENEAYISLLVGKKRLDKRIDIKILRDGKKAIKVNSIKINKIGELFGTFNVVMFSPEDLKIIKESPGIRRKFLDMELCQISKKYYFNLVQYNKILNERNVILRSRDFNKDILEVYDLQLVECADYIVKERLEYIDKINYYGKFIHNEITSGKEDIVFKYDSGIKFKDDFKYAFLEKLKNNLLRDREQGITSIGPHRDDFNVLINNIDVKKFGSQGQQRTAVLTMKFSSLKIIKEITKEYPILLLDDVLSELDINRKRYVLSTLNDIQTIITCTGINDLEDYLDDKSKVFKVCNGEIVN</sequence>
<accession>B2THB7</accession>
<gene>
    <name evidence="1" type="primary">recF</name>
    <name type="ordered locus">CLL_A0004</name>
</gene>
<evidence type="ECO:0000255" key="1">
    <source>
        <dbReference type="HAMAP-Rule" id="MF_00365"/>
    </source>
</evidence>
<protein>
    <recommendedName>
        <fullName evidence="1">DNA replication and repair protein RecF</fullName>
    </recommendedName>
</protein>
<reference key="1">
    <citation type="submission" date="2008-04" db="EMBL/GenBank/DDBJ databases">
        <title>Complete sequence of Clostridium botulinum strain Eklund.</title>
        <authorList>
            <person name="Brinkac L.M."/>
            <person name="Brown J.L."/>
            <person name="Bruce D."/>
            <person name="Detter C."/>
            <person name="Munk C."/>
            <person name="Smith L.A."/>
            <person name="Smith T.J."/>
            <person name="Sutton G."/>
            <person name="Brettin T.S."/>
        </authorList>
    </citation>
    <scope>NUCLEOTIDE SEQUENCE [LARGE SCALE GENOMIC DNA]</scope>
    <source>
        <strain>Eklund 17B / Type B</strain>
    </source>
</reference>